<comment type="function">
    <text evidence="1">F(1)F(0) ATP synthase produces ATP from ADP in the presence of a proton or sodium gradient. F-type ATPases consist of two structural domains, F(1) containing the extramembraneous catalytic core and F(0) containing the membrane proton channel, linked together by a central stalk and a peripheral stalk. During catalysis, ATP synthesis in the catalytic domain of F(1) is coupled via a rotary mechanism of the central stalk subunits to proton translocation.</text>
</comment>
<comment type="function">
    <text evidence="1">This protein is part of the stalk that links CF(0) to CF(1). It either transmits conformational changes from CF(0) to CF(1) or is implicated in proton conduction.</text>
</comment>
<comment type="subunit">
    <text evidence="1">F-type ATPases have 2 components, F(1) - the catalytic core - and F(0) - the membrane proton channel. F(1) has five subunits: alpha(3), beta(3), gamma(1), delta(1), epsilon(1). F(0) has three main subunits: a(1), b(2) and c(10-14). The alpha and beta chains form an alternating ring which encloses part of the gamma chain. F(1) is attached to F(0) by a central stalk formed by the gamma and epsilon chains, while a peripheral stalk is formed by the delta and b chains.</text>
</comment>
<comment type="subcellular location">
    <subcellularLocation>
        <location evidence="1">Cell membrane</location>
        <topology evidence="1">Peripheral membrane protein</topology>
    </subcellularLocation>
</comment>
<comment type="similarity">
    <text evidence="1">Belongs to the ATPase delta chain family.</text>
</comment>
<accession>C3P1F7</accession>
<feature type="chain" id="PRO_1000184645" description="ATP synthase subunit delta">
    <location>
        <begin position="1"/>
        <end position="180"/>
    </location>
</feature>
<sequence>MSNGIVAKRYAVALFKIAKEKHVLEMFEEELRLVQNVYEKNGELHSFLTQPNISKEQKKTFLANVFGSVSESILNTLYILIDNKRIDILSDIANEYVVLANEERNVADATVYSTRLLSEEEKLNIAEAFAKRTGKDAIRVKNVVDEDLLGGIKVRIGNRIYDGSLQGKLARIQRELMKNR</sequence>
<reference key="1">
    <citation type="submission" date="2009-04" db="EMBL/GenBank/DDBJ databases">
        <title>Genome sequence of Bacillus anthracis A0248.</title>
        <authorList>
            <person name="Dodson R.J."/>
            <person name="Munk A.C."/>
            <person name="Bruce D."/>
            <person name="Detter C."/>
            <person name="Tapia R."/>
            <person name="Sutton G."/>
            <person name="Sims D."/>
            <person name="Brettin T."/>
        </authorList>
    </citation>
    <scope>NUCLEOTIDE SEQUENCE [LARGE SCALE GENOMIC DNA]</scope>
    <source>
        <strain>A0248</strain>
    </source>
</reference>
<proteinExistence type="inferred from homology"/>
<evidence type="ECO:0000255" key="1">
    <source>
        <dbReference type="HAMAP-Rule" id="MF_01416"/>
    </source>
</evidence>
<gene>
    <name evidence="1" type="primary">atpH</name>
    <name type="ordered locus">BAA_5578</name>
</gene>
<protein>
    <recommendedName>
        <fullName evidence="1">ATP synthase subunit delta</fullName>
    </recommendedName>
    <alternativeName>
        <fullName evidence="1">ATP synthase F(1) sector subunit delta</fullName>
    </alternativeName>
    <alternativeName>
        <fullName evidence="1">F-type ATPase subunit delta</fullName>
        <shortName evidence="1">F-ATPase subunit delta</shortName>
    </alternativeName>
</protein>
<name>ATPD_BACAA</name>
<dbReference type="EMBL" id="CP001598">
    <property type="protein sequence ID" value="ACQ47479.1"/>
    <property type="molecule type" value="Genomic_DNA"/>
</dbReference>
<dbReference type="RefSeq" id="WP_000064678.1">
    <property type="nucleotide sequence ID" value="NC_012659.1"/>
</dbReference>
<dbReference type="SMR" id="C3P1F7"/>
<dbReference type="GeneID" id="45025138"/>
<dbReference type="KEGG" id="bai:BAA_5578"/>
<dbReference type="HOGENOM" id="CLU_085114_4_1_9"/>
<dbReference type="GO" id="GO:0005886">
    <property type="term" value="C:plasma membrane"/>
    <property type="evidence" value="ECO:0007669"/>
    <property type="project" value="UniProtKB-SubCell"/>
</dbReference>
<dbReference type="GO" id="GO:0045259">
    <property type="term" value="C:proton-transporting ATP synthase complex"/>
    <property type="evidence" value="ECO:0007669"/>
    <property type="project" value="UniProtKB-KW"/>
</dbReference>
<dbReference type="GO" id="GO:0046933">
    <property type="term" value="F:proton-transporting ATP synthase activity, rotational mechanism"/>
    <property type="evidence" value="ECO:0007669"/>
    <property type="project" value="UniProtKB-UniRule"/>
</dbReference>
<dbReference type="Gene3D" id="1.10.520.20">
    <property type="entry name" value="N-terminal domain of the delta subunit of the F1F0-ATP synthase"/>
    <property type="match status" value="1"/>
</dbReference>
<dbReference type="HAMAP" id="MF_01416">
    <property type="entry name" value="ATP_synth_delta_bact"/>
    <property type="match status" value="1"/>
</dbReference>
<dbReference type="InterPro" id="IPR026015">
    <property type="entry name" value="ATP_synth_OSCP/delta_N_sf"/>
</dbReference>
<dbReference type="InterPro" id="IPR020781">
    <property type="entry name" value="ATPase_OSCP/d_CS"/>
</dbReference>
<dbReference type="InterPro" id="IPR000711">
    <property type="entry name" value="ATPase_OSCP/dsu"/>
</dbReference>
<dbReference type="NCBIfam" id="TIGR01145">
    <property type="entry name" value="ATP_synt_delta"/>
    <property type="match status" value="1"/>
</dbReference>
<dbReference type="NCBIfam" id="NF004402">
    <property type="entry name" value="PRK05758.2-2"/>
    <property type="match status" value="1"/>
</dbReference>
<dbReference type="NCBIfam" id="NF004403">
    <property type="entry name" value="PRK05758.2-4"/>
    <property type="match status" value="1"/>
</dbReference>
<dbReference type="PANTHER" id="PTHR11910">
    <property type="entry name" value="ATP SYNTHASE DELTA CHAIN"/>
    <property type="match status" value="1"/>
</dbReference>
<dbReference type="Pfam" id="PF00213">
    <property type="entry name" value="OSCP"/>
    <property type="match status" value="1"/>
</dbReference>
<dbReference type="PRINTS" id="PR00125">
    <property type="entry name" value="ATPASEDELTA"/>
</dbReference>
<dbReference type="SUPFAM" id="SSF47928">
    <property type="entry name" value="N-terminal domain of the delta subunit of the F1F0-ATP synthase"/>
    <property type="match status" value="1"/>
</dbReference>
<dbReference type="PROSITE" id="PS00389">
    <property type="entry name" value="ATPASE_DELTA"/>
    <property type="match status" value="1"/>
</dbReference>
<organism>
    <name type="scientific">Bacillus anthracis (strain A0248)</name>
    <dbReference type="NCBI Taxonomy" id="592021"/>
    <lineage>
        <taxon>Bacteria</taxon>
        <taxon>Bacillati</taxon>
        <taxon>Bacillota</taxon>
        <taxon>Bacilli</taxon>
        <taxon>Bacillales</taxon>
        <taxon>Bacillaceae</taxon>
        <taxon>Bacillus</taxon>
        <taxon>Bacillus cereus group</taxon>
    </lineage>
</organism>
<keyword id="KW-0066">ATP synthesis</keyword>
<keyword id="KW-1003">Cell membrane</keyword>
<keyword id="KW-0139">CF(1)</keyword>
<keyword id="KW-0375">Hydrogen ion transport</keyword>
<keyword id="KW-0406">Ion transport</keyword>
<keyword id="KW-0472">Membrane</keyword>
<keyword id="KW-0813">Transport</keyword>